<proteinExistence type="evidence at protein level"/>
<comment type="function">
    <text evidence="1">Accessory protein that regulates signaling by multiple TLRs, acting as a broad-spanning regulator of the innate immune response. In macrophages, binds LPS and promotes proper docking of LPS in lipid raft membrane. May be required for lipid raft maintenance.</text>
</comment>
<comment type="interaction">
    <interactant intactId="EBI-718707">
        <id>O75427</id>
    </interactant>
    <interactant intactId="EBI-1046040">
        <id>P00387</id>
        <label>CYB5R3</label>
    </interactant>
    <organismsDiffer>false</organismsDiffer>
    <experiments>3</experiments>
</comment>
<comment type="interaction">
    <interactant intactId="EBI-718707">
        <id>O75427</id>
    </interactant>
    <interactant intactId="EBI-4401295">
        <id>Q96HP0</id>
        <label>DOCK6</label>
    </interactant>
    <organismsDiffer>false</organismsDiffer>
    <experiments>2</experiments>
</comment>
<comment type="interaction">
    <interactant intactId="EBI-718707">
        <id>O75427</id>
    </interactant>
    <interactant intactId="EBI-2433703">
        <id>Q96N67</id>
        <label>DOCK7</label>
    </interactant>
    <organismsDiffer>false</organismsDiffer>
    <experiments>2</experiments>
</comment>
<comment type="interaction">
    <interactant intactId="EBI-718707">
        <id>O75427</id>
    </interactant>
    <interactant intactId="EBI-25409271">
        <id>Q8NF50-3</id>
        <label>DOCK8</label>
    </interactant>
    <organismsDiffer>false</organismsDiffer>
    <experiments>2</experiments>
</comment>
<comment type="interaction">
    <interactant intactId="EBI-718707">
        <id>O75427</id>
    </interactant>
    <interactant intactId="EBI-10285373">
        <id>A1L3X0</id>
        <label>ELOVL7</label>
    </interactant>
    <organismsDiffer>false</organismsDiffer>
    <experiments>3</experiments>
</comment>
<comment type="interaction">
    <interactant intactId="EBI-718707">
        <id>O75427</id>
    </interactant>
    <interactant intactId="EBI-1052304">
        <id>Q8NBQ5</id>
        <label>HSD17B11</label>
    </interactant>
    <organismsDiffer>false</organismsDiffer>
    <experiments>3</experiments>
</comment>
<comment type="interaction">
    <interactant intactId="EBI-718707">
        <id>O75427</id>
    </interactant>
    <interactant intactId="EBI-749265">
        <id>Q8N6L0</id>
        <label>KASH5</label>
    </interactant>
    <organismsDiffer>false</organismsDiffer>
    <experiments>3</experiments>
</comment>
<comment type="interaction">
    <interactant intactId="EBI-718707">
        <id>O75427</id>
    </interactant>
    <interactant intactId="EBI-10171697">
        <id>Q6A162</id>
        <label>KRT40</label>
    </interactant>
    <organismsDiffer>false</organismsDiffer>
    <experiments>3</experiments>
</comment>
<comment type="interaction">
    <interactant intactId="EBI-718707">
        <id>O75427</id>
    </interactant>
    <interactant intactId="EBI-10172290">
        <id>P60409</id>
        <label>KRTAP10-7</label>
    </interactant>
    <organismsDiffer>false</organismsDiffer>
    <experiments>3</experiments>
</comment>
<comment type="interaction">
    <interactant intactId="EBI-718707">
        <id>O75427</id>
    </interactant>
    <interactant intactId="EBI-10171774">
        <id>P60410</id>
        <label>KRTAP10-8</label>
    </interactant>
    <organismsDiffer>false</organismsDiffer>
    <experiments>3</experiments>
</comment>
<comment type="interaction">
    <interactant intactId="EBI-718707">
        <id>O75427</id>
    </interactant>
    <interactant intactId="EBI-724076">
        <id>Q99750</id>
        <label>MDFI</label>
    </interactant>
    <organismsDiffer>false</organismsDiffer>
    <experiments>3</experiments>
</comment>
<comment type="interaction">
    <interactant intactId="EBI-718707">
        <id>O75427</id>
    </interactant>
    <interactant intactId="EBI-945833">
        <id>Q7Z3S9</id>
        <label>NOTCH2NLA</label>
    </interactant>
    <organismsDiffer>false</organismsDiffer>
    <experiments>3</experiments>
</comment>
<comment type="interaction">
    <interactant intactId="EBI-718707">
        <id>O75427</id>
    </interactant>
    <interactant intactId="EBI-10192441">
        <id>Q86VR2</id>
        <label>RETREG3</label>
    </interactant>
    <organismsDiffer>false</organismsDiffer>
    <experiments>3</experiments>
</comment>
<comment type="interaction">
    <interactant intactId="EBI-718707">
        <id>O75427</id>
    </interactant>
    <interactant intactId="EBI-18397230">
        <id>Q6P5S7</id>
        <label>RNASEK</label>
    </interactant>
    <organismsDiffer>false</organismsDiffer>
    <experiments>3</experiments>
</comment>
<comment type="interaction">
    <interactant intactId="EBI-718707">
        <id>O75427</id>
    </interactant>
    <interactant intactId="EBI-307008">
        <id>Q9Y2Z0</id>
        <label>SUGT1</label>
    </interactant>
    <organismsDiffer>false</organismsDiffer>
    <experiments>2</experiments>
</comment>
<comment type="subcellular location">
    <subcellularLocation>
        <location evidence="1">Cell membrane</location>
        <topology evidence="2">Single-pass membrane protein</topology>
    </subcellularLocation>
</comment>
<comment type="sequence caution" evidence="6">
    <conflict type="erroneous gene model prediction">
        <sequence resource="EMBL-CDS" id="AAC78793"/>
    </conflict>
</comment>
<accession>O75427</accession>
<accession>A4D2D5</accession>
<accession>Q8WV85</accession>
<accession>Q96ID0</accession>
<organism>
    <name type="scientific">Homo sapiens</name>
    <name type="common">Human</name>
    <dbReference type="NCBI Taxonomy" id="9606"/>
    <lineage>
        <taxon>Eukaryota</taxon>
        <taxon>Metazoa</taxon>
        <taxon>Chordata</taxon>
        <taxon>Craniata</taxon>
        <taxon>Vertebrata</taxon>
        <taxon>Euteleostomi</taxon>
        <taxon>Mammalia</taxon>
        <taxon>Eutheria</taxon>
        <taxon>Euarchontoglires</taxon>
        <taxon>Primates</taxon>
        <taxon>Haplorrhini</taxon>
        <taxon>Catarrhini</taxon>
        <taxon>Hominidae</taxon>
        <taxon>Homo</taxon>
    </lineage>
</organism>
<gene>
    <name evidence="7" type="primary">LRCH4</name>
    <name type="synonym">LRN</name>
    <name type="synonym">LRRN1</name>
    <name type="synonym">LRRN4</name>
</gene>
<sequence length="683" mass="73450">MAAAVAAPLAAGGEEAAATTSVPGSPGLPGRRSAERALEEAVATGTLNLSNRRLKHFPRGAARSYDLSDITQADLSRNRFPEVPEAACQLVSLEGLSLYHNCLRCLNPALGNLTALTYLNLSRNQLSLLPPYICQLPLRVLIVSNNKLGALPPDIGTLGSLRQLDVSSNELQSLPSELCGLSSLRDLNVRRNQLSTLPEELGDLPLVRLDFSCNRVSRIPVSFCRLRHLQVILLDSNPLQSPPAQVCLKGKLHIFKYLSTEAGQRGSALGDLAPSRPPSFSPCPAEDLFPGHRYDGGLDSGFHSVDSGSKRWSGNESTDEFSELSFRISELAREPRGPRERKEDGSADGDPVQIDFIDSHVPGEDEERGTVEEQRPPELSPGAGDRERAPSSRREEPAGEERRRPDTLQLWQERERRQQQQSGAWGAPRKDSLLKPGLRAVVGGAAAVSTQAMHNGSPKSSASQAGAAAGQGAPAPAPASQEPLPIAGPATAPAPRPLGSIQRPNSFLFRSSSQSGSGPSSPDSVLRPRRYPQVPDEKDLMTQLRQVLESRLQRPLPEDLAEALASGVILCQLANQLRPRSVPFIHVPSPAVPKLSALKARKNVESFLEACRKMGVPEADLCSPSDLLQGTARGLRTALEAVKRVGGKALPPLWPPSGLGGFVVFYVVLMLLLYVTYTRLLGS</sequence>
<reference key="1">
    <citation type="journal article" date="1998" name="Genome Res.">
        <title>Large-scale sequencing of two regions in human chromosome 7q22: analysis of 650 kb of genomic sequence around the EPO and CUTL1 loci reveals 17 genes.</title>
        <authorList>
            <person name="Gloeckner G."/>
            <person name="Scherer S."/>
            <person name="Schattevoy R."/>
            <person name="Boright A.P."/>
            <person name="Weber J."/>
            <person name="Tsui L.-C."/>
            <person name="Rosenthal A."/>
        </authorList>
    </citation>
    <scope>NUCLEOTIDE SEQUENCE [GENOMIC DNA]</scope>
</reference>
<reference key="2">
    <citation type="journal article" date="2003" name="Science">
        <title>Human chromosome 7: DNA sequence and biology.</title>
        <authorList>
            <person name="Scherer S.W."/>
            <person name="Cheung J."/>
            <person name="MacDonald J.R."/>
            <person name="Osborne L.R."/>
            <person name="Nakabayashi K."/>
            <person name="Herbrick J.-A."/>
            <person name="Carson A.R."/>
            <person name="Parker-Katiraee L."/>
            <person name="Skaug J."/>
            <person name="Khaja R."/>
            <person name="Zhang J."/>
            <person name="Hudek A.K."/>
            <person name="Li M."/>
            <person name="Haddad M."/>
            <person name="Duggan G.E."/>
            <person name="Fernandez B.A."/>
            <person name="Kanematsu E."/>
            <person name="Gentles S."/>
            <person name="Christopoulos C.C."/>
            <person name="Choufani S."/>
            <person name="Kwasnicka D."/>
            <person name="Zheng X.H."/>
            <person name="Lai Z."/>
            <person name="Nusskern D.R."/>
            <person name="Zhang Q."/>
            <person name="Gu Z."/>
            <person name="Lu F."/>
            <person name="Zeesman S."/>
            <person name="Nowaczyk M.J."/>
            <person name="Teshima I."/>
            <person name="Chitayat D."/>
            <person name="Shuman C."/>
            <person name="Weksberg R."/>
            <person name="Zackai E.H."/>
            <person name="Grebe T.A."/>
            <person name="Cox S.R."/>
            <person name="Kirkpatrick S.J."/>
            <person name="Rahman N."/>
            <person name="Friedman J.M."/>
            <person name="Heng H.H.Q."/>
            <person name="Pelicci P.G."/>
            <person name="Lo-Coco F."/>
            <person name="Belloni E."/>
            <person name="Shaffer L.G."/>
            <person name="Pober B."/>
            <person name="Morton C.C."/>
            <person name="Gusella J.F."/>
            <person name="Bruns G.A.P."/>
            <person name="Korf B.R."/>
            <person name="Quade B.J."/>
            <person name="Ligon A.H."/>
            <person name="Ferguson H."/>
            <person name="Higgins A.W."/>
            <person name="Leach N.T."/>
            <person name="Herrick S.R."/>
            <person name="Lemyre E."/>
            <person name="Farra C.G."/>
            <person name="Kim H.-G."/>
            <person name="Summers A.M."/>
            <person name="Gripp K.W."/>
            <person name="Roberts W."/>
            <person name="Szatmari P."/>
            <person name="Winsor E.J.T."/>
            <person name="Grzeschik K.-H."/>
            <person name="Teebi A."/>
            <person name="Minassian B.A."/>
            <person name="Kere J."/>
            <person name="Armengol L."/>
            <person name="Pujana M.A."/>
            <person name="Estivill X."/>
            <person name="Wilson M.D."/>
            <person name="Koop B.F."/>
            <person name="Tosi S."/>
            <person name="Moore G.E."/>
            <person name="Boright A.P."/>
            <person name="Zlotorynski E."/>
            <person name="Kerem B."/>
            <person name="Kroisel P.M."/>
            <person name="Petek E."/>
            <person name="Oscier D.G."/>
            <person name="Mould S.J."/>
            <person name="Doehner H."/>
            <person name="Doehner K."/>
            <person name="Rommens J.M."/>
            <person name="Vincent J.B."/>
            <person name="Venter J.C."/>
            <person name="Li P.W."/>
            <person name="Mural R.J."/>
            <person name="Adams M.D."/>
            <person name="Tsui L.-C."/>
        </authorList>
    </citation>
    <scope>NUCLEOTIDE SEQUENCE [LARGE SCALE GENOMIC DNA]</scope>
</reference>
<reference key="3">
    <citation type="journal article" date="2004" name="Genome Res.">
        <title>The status, quality, and expansion of the NIH full-length cDNA project: the Mammalian Gene Collection (MGC).</title>
        <authorList>
            <consortium name="The MGC Project Team"/>
        </authorList>
    </citation>
    <scope>NUCLEOTIDE SEQUENCE [LARGE SCALE MRNA]</scope>
    <scope>VARIANT MET-642</scope>
    <source>
        <tissue>Muscle</tissue>
        <tissue>Skin</tissue>
    </source>
</reference>
<reference key="4">
    <citation type="journal article" date="2008" name="Proc. Natl. Acad. Sci. U.S.A.">
        <title>A quantitative atlas of mitotic phosphorylation.</title>
        <authorList>
            <person name="Dephoure N."/>
            <person name="Zhou C."/>
            <person name="Villen J."/>
            <person name="Beausoleil S.A."/>
            <person name="Bakalarski C.E."/>
            <person name="Elledge S.J."/>
            <person name="Gygi S.P."/>
        </authorList>
    </citation>
    <scope>PHOSPHORYLATION [LARGE SCALE ANALYSIS] AT SER-457; SER-511; SER-517 AND SER-521</scope>
    <scope>IDENTIFICATION BY MASS SPECTROMETRY [LARGE SCALE ANALYSIS]</scope>
    <source>
        <tissue>Cervix carcinoma</tissue>
    </source>
</reference>
<reference key="5">
    <citation type="journal article" date="2009" name="Sci. Signal.">
        <title>Quantitative phosphoproteomic analysis of T cell receptor signaling reveals system-wide modulation of protein-protein interactions.</title>
        <authorList>
            <person name="Mayya V."/>
            <person name="Lundgren D.H."/>
            <person name="Hwang S.-I."/>
            <person name="Rezaul K."/>
            <person name="Wu L."/>
            <person name="Eng J.K."/>
            <person name="Rodionov V."/>
            <person name="Han D.K."/>
        </authorList>
    </citation>
    <scope>IDENTIFICATION BY MASS SPECTROMETRY [LARGE SCALE ANALYSIS]</scope>
    <source>
        <tissue>Leukemic T-cell</tissue>
    </source>
</reference>
<reference key="6">
    <citation type="journal article" date="2013" name="J. Proteome Res.">
        <title>Toward a comprehensive characterization of a human cancer cell phosphoproteome.</title>
        <authorList>
            <person name="Zhou H."/>
            <person name="Di Palma S."/>
            <person name="Preisinger C."/>
            <person name="Peng M."/>
            <person name="Polat A.N."/>
            <person name="Heck A.J."/>
            <person name="Mohammed S."/>
        </authorList>
    </citation>
    <scope>PHOSPHORYLATION [LARGE SCALE ANALYSIS] AT SER-304; SER-307; SER-309; SER-432; SER-457; SER-513; SER-521 AND SER-589</scope>
    <scope>IDENTIFICATION BY MASS SPECTROMETRY [LARGE SCALE ANALYSIS]</scope>
    <source>
        <tissue>Cervix carcinoma</tissue>
        <tissue>Erythroleukemia</tissue>
    </source>
</reference>
<reference key="7">
    <citation type="journal article" date="2014" name="J. Proteomics">
        <title>An enzyme assisted RP-RPLC approach for in-depth analysis of human liver phosphoproteome.</title>
        <authorList>
            <person name="Bian Y."/>
            <person name="Song C."/>
            <person name="Cheng K."/>
            <person name="Dong M."/>
            <person name="Wang F."/>
            <person name="Huang J."/>
            <person name="Sun D."/>
            <person name="Wang L."/>
            <person name="Ye M."/>
            <person name="Zou H."/>
        </authorList>
    </citation>
    <scope>IDENTIFICATION BY MASS SPECTROMETRY [LARGE SCALE ANALYSIS]</scope>
    <source>
        <tissue>Liver</tissue>
    </source>
</reference>
<feature type="chain" id="PRO_0000084480" description="Leucine-rich repeat and calponin homology domain-containing protein 4">
    <location>
        <begin position="1"/>
        <end position="683"/>
    </location>
</feature>
<feature type="transmembrane region" description="Helical" evidence="2">
    <location>
        <begin position="653"/>
        <end position="673"/>
    </location>
</feature>
<feature type="repeat" description="LRR 1" evidence="2">
    <location>
        <begin position="41"/>
        <end position="64"/>
    </location>
</feature>
<feature type="repeat" description="LRR 2" evidence="2">
    <location>
        <begin position="67"/>
        <end position="90"/>
    </location>
</feature>
<feature type="repeat" description="LRR 3" evidence="2">
    <location>
        <begin position="92"/>
        <end position="113"/>
    </location>
</feature>
<feature type="repeat" description="LRR 4" evidence="2">
    <location>
        <begin position="114"/>
        <end position="136"/>
    </location>
</feature>
<feature type="repeat" description="LRR 5" evidence="2">
    <location>
        <begin position="138"/>
        <end position="158"/>
    </location>
</feature>
<feature type="repeat" description="LRR 6" evidence="2">
    <location>
        <begin position="159"/>
        <end position="181"/>
    </location>
</feature>
<feature type="repeat" description="LRR 7" evidence="2">
    <location>
        <begin position="182"/>
        <end position="204"/>
    </location>
</feature>
<feature type="repeat" description="LRR 8" evidence="2">
    <location>
        <begin position="206"/>
        <end position="226"/>
    </location>
</feature>
<feature type="repeat" description="LRR 9" evidence="2">
    <location>
        <begin position="227"/>
        <end position="250"/>
    </location>
</feature>
<feature type="domain" description="Calponin-homology (CH)" evidence="3">
    <location>
        <begin position="534"/>
        <end position="647"/>
    </location>
</feature>
<feature type="region of interest" description="Disordered" evidence="4">
    <location>
        <begin position="1"/>
        <end position="34"/>
    </location>
</feature>
<feature type="region of interest" description="Disordered" evidence="4">
    <location>
        <begin position="268"/>
        <end position="292"/>
    </location>
</feature>
<feature type="region of interest" description="Disordered" evidence="4">
    <location>
        <begin position="326"/>
        <end position="436"/>
    </location>
</feature>
<feature type="region of interest" description="Disordered" evidence="4">
    <location>
        <begin position="449"/>
        <end position="539"/>
    </location>
</feature>
<feature type="compositionally biased region" description="Low complexity" evidence="4">
    <location>
        <begin position="1"/>
        <end position="18"/>
    </location>
</feature>
<feature type="compositionally biased region" description="Basic and acidic residues" evidence="4">
    <location>
        <begin position="330"/>
        <end position="345"/>
    </location>
</feature>
<feature type="compositionally biased region" description="Basic and acidic residues" evidence="4">
    <location>
        <begin position="357"/>
        <end position="376"/>
    </location>
</feature>
<feature type="compositionally biased region" description="Basic and acidic residues" evidence="4">
    <location>
        <begin position="384"/>
        <end position="418"/>
    </location>
</feature>
<feature type="compositionally biased region" description="Polar residues" evidence="4">
    <location>
        <begin position="449"/>
        <end position="460"/>
    </location>
</feature>
<feature type="compositionally biased region" description="Low complexity" evidence="4">
    <location>
        <begin position="461"/>
        <end position="481"/>
    </location>
</feature>
<feature type="compositionally biased region" description="Low complexity" evidence="4">
    <location>
        <begin position="511"/>
        <end position="524"/>
    </location>
</feature>
<feature type="modified residue" description="Phosphoserine" evidence="1">
    <location>
        <position position="279"/>
    </location>
</feature>
<feature type="modified residue" description="Phosphoserine" evidence="1">
    <location>
        <position position="281"/>
    </location>
</feature>
<feature type="modified residue" description="Phosphoserine" evidence="9">
    <location>
        <position position="304"/>
    </location>
</feature>
<feature type="modified residue" description="Phosphoserine" evidence="9">
    <location>
        <position position="307"/>
    </location>
</feature>
<feature type="modified residue" description="Phosphoserine" evidence="9">
    <location>
        <position position="309"/>
    </location>
</feature>
<feature type="modified residue" description="Phosphoserine" evidence="1">
    <location>
        <position position="313"/>
    </location>
</feature>
<feature type="modified residue" description="Phosphoserine" evidence="9">
    <location>
        <position position="432"/>
    </location>
</feature>
<feature type="modified residue" description="Phosphoserine" evidence="8 9">
    <location>
        <position position="457"/>
    </location>
</feature>
<feature type="modified residue" description="Phosphoserine" evidence="8">
    <location>
        <position position="511"/>
    </location>
</feature>
<feature type="modified residue" description="Phosphoserine" evidence="9">
    <location>
        <position position="513"/>
    </location>
</feature>
<feature type="modified residue" description="Phosphoserine" evidence="8">
    <location>
        <position position="517"/>
    </location>
</feature>
<feature type="modified residue" description="Phosphoserine" evidence="8 9">
    <location>
        <position position="521"/>
    </location>
</feature>
<feature type="modified residue" description="Phosphoserine" evidence="9">
    <location>
        <position position="589"/>
    </location>
</feature>
<feature type="sequence variant" id="VAR_051135" description="In dbSNP:rs3197597." evidence="5">
    <original>V</original>
    <variation>M</variation>
    <location>
        <position position="642"/>
    </location>
</feature>
<feature type="sequence conflict" description="In Ref. 1; AAC78793." evidence="6" ref="1">
    <original>E</original>
    <variation>D</variation>
    <location>
        <position position="40"/>
    </location>
</feature>
<feature type="sequence conflict" description="In Ref. 1; AAC78793." evidence="6" ref="1">
    <original>S</original>
    <variation>N</variation>
    <location>
        <position position="391"/>
    </location>
</feature>
<feature type="sequence conflict" description="In Ref. 1; AAC78793." evidence="6" ref="1">
    <original>AAAGQGA</original>
    <variation>GCSGAGS</variation>
    <location>
        <begin position="467"/>
        <end position="473"/>
    </location>
</feature>
<feature type="sequence conflict" description="In Ref. 1." evidence="6" ref="1">
    <original>GS</original>
    <variation>DP</variation>
    <location>
        <begin position="682"/>
        <end position="683"/>
    </location>
</feature>
<evidence type="ECO:0000250" key="1">
    <source>
        <dbReference type="UniProtKB" id="Q921G6"/>
    </source>
</evidence>
<evidence type="ECO:0000255" key="2"/>
<evidence type="ECO:0000255" key="3">
    <source>
        <dbReference type="PROSITE-ProRule" id="PRU00044"/>
    </source>
</evidence>
<evidence type="ECO:0000256" key="4">
    <source>
        <dbReference type="SAM" id="MobiDB-lite"/>
    </source>
</evidence>
<evidence type="ECO:0000269" key="5">
    <source>
    </source>
</evidence>
<evidence type="ECO:0000305" key="6"/>
<evidence type="ECO:0000312" key="7">
    <source>
        <dbReference type="HGNC" id="HGNC:6691"/>
    </source>
</evidence>
<evidence type="ECO:0007744" key="8">
    <source>
    </source>
</evidence>
<evidence type="ECO:0007744" key="9">
    <source>
    </source>
</evidence>
<name>LRCH4_HUMAN</name>
<keyword id="KW-1003">Cell membrane</keyword>
<keyword id="KW-0433">Leucine-rich repeat</keyword>
<keyword id="KW-0472">Membrane</keyword>
<keyword id="KW-0597">Phosphoprotein</keyword>
<keyword id="KW-1267">Proteomics identification</keyword>
<keyword id="KW-1185">Reference proteome</keyword>
<keyword id="KW-0677">Repeat</keyword>
<keyword id="KW-0812">Transmembrane</keyword>
<keyword id="KW-1133">Transmembrane helix</keyword>
<dbReference type="EMBL" id="AF053356">
    <property type="protein sequence ID" value="AAC78793.1"/>
    <property type="status" value="ALT_SEQ"/>
    <property type="molecule type" value="Genomic_DNA"/>
</dbReference>
<dbReference type="EMBL" id="CH236956">
    <property type="protein sequence ID" value="EAL23828.1"/>
    <property type="molecule type" value="Genomic_DNA"/>
</dbReference>
<dbReference type="EMBL" id="BC007634">
    <property type="protein sequence ID" value="AAH07634.1"/>
    <property type="molecule type" value="mRNA"/>
</dbReference>
<dbReference type="EMBL" id="BC018529">
    <property type="protein sequence ID" value="AAH18529.3"/>
    <property type="molecule type" value="mRNA"/>
</dbReference>
<dbReference type="CCDS" id="CCDS34706.1"/>
<dbReference type="RefSeq" id="NP_001276863.1">
    <property type="nucleotide sequence ID" value="NM_001289934.1"/>
</dbReference>
<dbReference type="RefSeq" id="NP_002310.2">
    <property type="nucleotide sequence ID" value="NM_002319.4"/>
</dbReference>
<dbReference type="SMR" id="O75427"/>
<dbReference type="BioGRID" id="110214">
    <property type="interactions" value="39"/>
</dbReference>
<dbReference type="FunCoup" id="O75427">
    <property type="interactions" value="895"/>
</dbReference>
<dbReference type="IntAct" id="O75427">
    <property type="interactions" value="29"/>
</dbReference>
<dbReference type="MINT" id="O75427"/>
<dbReference type="STRING" id="9606.ENSP00000309689"/>
<dbReference type="GlyCosmos" id="O75427">
    <property type="glycosylation" value="2 sites, 1 glycan"/>
</dbReference>
<dbReference type="GlyGen" id="O75427">
    <property type="glycosylation" value="2 sites, 1 O-linked glycan (2 sites)"/>
</dbReference>
<dbReference type="iPTMnet" id="O75427"/>
<dbReference type="PhosphoSitePlus" id="O75427"/>
<dbReference type="SwissPalm" id="O75427"/>
<dbReference type="BioMuta" id="LRCH4"/>
<dbReference type="jPOST" id="O75427"/>
<dbReference type="MassIVE" id="O75427"/>
<dbReference type="PaxDb" id="9606-ENSP00000309689"/>
<dbReference type="PeptideAtlas" id="O75427"/>
<dbReference type="ProteomicsDB" id="50000"/>
<dbReference type="Pumba" id="O75427"/>
<dbReference type="Antibodypedia" id="30732">
    <property type="antibodies" value="157 antibodies from 20 providers"/>
</dbReference>
<dbReference type="DNASU" id="4034"/>
<dbReference type="Ensembl" id="ENST00000310300.11">
    <property type="protein sequence ID" value="ENSP00000309689.6"/>
    <property type="gene ID" value="ENSG00000077454.17"/>
</dbReference>
<dbReference type="GeneID" id="4034"/>
<dbReference type="KEGG" id="hsa:4034"/>
<dbReference type="MANE-Select" id="ENST00000310300.11">
    <property type="protein sequence ID" value="ENSP00000309689.6"/>
    <property type="RefSeq nucleotide sequence ID" value="NM_002319.5"/>
    <property type="RefSeq protein sequence ID" value="NP_002310.2"/>
</dbReference>
<dbReference type="UCSC" id="uc003uvj.4">
    <property type="organism name" value="human"/>
</dbReference>
<dbReference type="AGR" id="HGNC:6691"/>
<dbReference type="CTD" id="4034"/>
<dbReference type="GeneCards" id="LRCH4"/>
<dbReference type="HGNC" id="HGNC:6691">
    <property type="gene designation" value="LRCH4"/>
</dbReference>
<dbReference type="HPA" id="ENSG00000077454">
    <property type="expression patterns" value="Low tissue specificity"/>
</dbReference>
<dbReference type="MIM" id="620165">
    <property type="type" value="gene"/>
</dbReference>
<dbReference type="neXtProt" id="NX_O75427"/>
<dbReference type="OpenTargets" id="ENSG00000077454"/>
<dbReference type="PharmGKB" id="PA30467"/>
<dbReference type="VEuPathDB" id="HostDB:ENSG00000077454"/>
<dbReference type="eggNOG" id="KOG0532">
    <property type="taxonomic scope" value="Eukaryota"/>
</dbReference>
<dbReference type="GeneTree" id="ENSGT00940000161668"/>
<dbReference type="HOGENOM" id="CLU_008231_2_0_1"/>
<dbReference type="InParanoid" id="O75427"/>
<dbReference type="OMA" id="RAPKQET"/>
<dbReference type="OrthoDB" id="6149831at2759"/>
<dbReference type="PAN-GO" id="O75427">
    <property type="GO annotations" value="1 GO annotation based on evolutionary models"/>
</dbReference>
<dbReference type="PhylomeDB" id="O75427"/>
<dbReference type="TreeFam" id="TF318428"/>
<dbReference type="PathwayCommons" id="O75427"/>
<dbReference type="SignaLink" id="O75427"/>
<dbReference type="BioGRID-ORCS" id="4034">
    <property type="hits" value="14 hits in 1153 CRISPR screens"/>
</dbReference>
<dbReference type="ChiTaRS" id="LRCH4">
    <property type="organism name" value="human"/>
</dbReference>
<dbReference type="GeneWiki" id="LRCH4"/>
<dbReference type="GenomeRNAi" id="4034"/>
<dbReference type="Pharos" id="O75427">
    <property type="development level" value="Tbio"/>
</dbReference>
<dbReference type="PRO" id="PR:O75427"/>
<dbReference type="Proteomes" id="UP000005640">
    <property type="component" value="Chromosome 7"/>
</dbReference>
<dbReference type="RNAct" id="O75427">
    <property type="molecule type" value="protein"/>
</dbReference>
<dbReference type="Bgee" id="ENSG00000077454">
    <property type="expression patterns" value="Expressed in granulocyte and 97 other cell types or tissues"/>
</dbReference>
<dbReference type="ExpressionAtlas" id="O75427">
    <property type="expression patterns" value="baseline and differential"/>
</dbReference>
<dbReference type="GO" id="GO:0005886">
    <property type="term" value="C:plasma membrane"/>
    <property type="evidence" value="ECO:0000250"/>
    <property type="project" value="UniProtKB"/>
</dbReference>
<dbReference type="GO" id="GO:0016605">
    <property type="term" value="C:PML body"/>
    <property type="evidence" value="ECO:0000314"/>
    <property type="project" value="MGI"/>
</dbReference>
<dbReference type="GO" id="GO:0001765">
    <property type="term" value="P:membrane raft assembly"/>
    <property type="evidence" value="ECO:0000250"/>
    <property type="project" value="UniProtKB"/>
</dbReference>
<dbReference type="GO" id="GO:0007399">
    <property type="term" value="P:nervous system development"/>
    <property type="evidence" value="ECO:0000304"/>
    <property type="project" value="ProtInc"/>
</dbReference>
<dbReference type="GO" id="GO:0034123">
    <property type="term" value="P:positive regulation of toll-like receptor signaling pathway"/>
    <property type="evidence" value="ECO:0000250"/>
    <property type="project" value="UniProtKB"/>
</dbReference>
<dbReference type="CDD" id="cd21273">
    <property type="entry name" value="CH_LRCH4"/>
    <property type="match status" value="1"/>
</dbReference>
<dbReference type="FunFam" id="3.80.10.10:FF:000067">
    <property type="entry name" value="Leucine-rich repeat and calponin homology domain-containing protein 4 isoform 1"/>
    <property type="match status" value="1"/>
</dbReference>
<dbReference type="FunFam" id="1.10.418.10:FF:000056">
    <property type="entry name" value="leucine-rich repeat and calponin homology domain-containing protein 4 isoform X2"/>
    <property type="match status" value="1"/>
</dbReference>
<dbReference type="FunFam" id="3.80.10.10:FF:000081">
    <property type="entry name" value="leucine-rich repeat and calponin homology domain-containing protein 4 isoform X2"/>
    <property type="match status" value="1"/>
</dbReference>
<dbReference type="Gene3D" id="1.10.418.10">
    <property type="entry name" value="Calponin-like domain"/>
    <property type="match status" value="1"/>
</dbReference>
<dbReference type="Gene3D" id="3.80.10.10">
    <property type="entry name" value="Ribonuclease Inhibitor"/>
    <property type="match status" value="2"/>
</dbReference>
<dbReference type="InterPro" id="IPR001715">
    <property type="entry name" value="CH_dom"/>
</dbReference>
<dbReference type="InterPro" id="IPR036872">
    <property type="entry name" value="CH_dom_sf"/>
</dbReference>
<dbReference type="InterPro" id="IPR001611">
    <property type="entry name" value="Leu-rich_rpt"/>
</dbReference>
<dbReference type="InterPro" id="IPR003591">
    <property type="entry name" value="Leu-rich_rpt_typical-subtyp"/>
</dbReference>
<dbReference type="InterPro" id="IPR032675">
    <property type="entry name" value="LRR_dom_sf"/>
</dbReference>
<dbReference type="InterPro" id="IPR050216">
    <property type="entry name" value="LRR_domain-containing"/>
</dbReference>
<dbReference type="PANTHER" id="PTHR48051">
    <property type="match status" value="1"/>
</dbReference>
<dbReference type="PANTHER" id="PTHR48051:SF64">
    <property type="entry name" value="LEUCINE RICH REPEATS AND CALPONIN HOMOLOGY DOMAIN CONTAINING 4"/>
    <property type="match status" value="1"/>
</dbReference>
<dbReference type="Pfam" id="PF00307">
    <property type="entry name" value="CH"/>
    <property type="match status" value="1"/>
</dbReference>
<dbReference type="Pfam" id="PF13855">
    <property type="entry name" value="LRR_8"/>
    <property type="match status" value="2"/>
</dbReference>
<dbReference type="SMART" id="SM00033">
    <property type="entry name" value="CH"/>
    <property type="match status" value="1"/>
</dbReference>
<dbReference type="SMART" id="SM00364">
    <property type="entry name" value="LRR_BAC"/>
    <property type="match status" value="4"/>
</dbReference>
<dbReference type="SMART" id="SM00369">
    <property type="entry name" value="LRR_TYP"/>
    <property type="match status" value="5"/>
</dbReference>
<dbReference type="SUPFAM" id="SSF47576">
    <property type="entry name" value="Calponin-homology domain, CH-domain"/>
    <property type="match status" value="1"/>
</dbReference>
<dbReference type="SUPFAM" id="SSF52058">
    <property type="entry name" value="L domain-like"/>
    <property type="match status" value="1"/>
</dbReference>
<dbReference type="PROSITE" id="PS50021">
    <property type="entry name" value="CH"/>
    <property type="match status" value="1"/>
</dbReference>
<dbReference type="PROSITE" id="PS51450">
    <property type="entry name" value="LRR"/>
    <property type="match status" value="7"/>
</dbReference>
<protein>
    <recommendedName>
        <fullName evidence="6">Leucine-rich repeat and calponin homology domain-containing protein 4</fullName>
    </recommendedName>
    <alternativeName>
        <fullName>Leucine-rich repeat neuronal protein 4</fullName>
        <shortName>Leucine-rich neuronal protein</shortName>
    </alternativeName>
</protein>